<protein>
    <recommendedName>
        <fullName>Uncharacterized protein R710</fullName>
    </recommendedName>
</protein>
<dbReference type="EMBL" id="AY653733">
    <property type="protein sequence ID" value="AAV50970.1"/>
    <property type="molecule type" value="Genomic_DNA"/>
</dbReference>
<dbReference type="SMR" id="Q5UQ56"/>
<dbReference type="KEGG" id="vg:9925363"/>
<dbReference type="Proteomes" id="UP000001134">
    <property type="component" value="Genome"/>
</dbReference>
<dbReference type="GO" id="GO:0033644">
    <property type="term" value="C:host cell membrane"/>
    <property type="evidence" value="ECO:0007669"/>
    <property type="project" value="UniProtKB-SubCell"/>
</dbReference>
<dbReference type="GO" id="GO:0016020">
    <property type="term" value="C:membrane"/>
    <property type="evidence" value="ECO:0007669"/>
    <property type="project" value="UniProtKB-KW"/>
</dbReference>
<dbReference type="GO" id="GO:0044423">
    <property type="term" value="C:virion component"/>
    <property type="evidence" value="ECO:0007669"/>
    <property type="project" value="UniProtKB-KW"/>
</dbReference>
<organismHost>
    <name type="scientific">Acanthamoeba polyphaga</name>
    <name type="common">Amoeba</name>
    <dbReference type="NCBI Taxonomy" id="5757"/>
</organismHost>
<comment type="subcellular location">
    <subcellularLocation>
        <location evidence="4">Host membrane</location>
        <topology evidence="4">Single-pass membrane protein</topology>
    </subcellularLocation>
    <subcellularLocation>
        <location evidence="3">Virion</location>
    </subcellularLocation>
</comment>
<gene>
    <name type="ordered locus">MIMI_R710</name>
</gene>
<feature type="chain" id="PRO_0000244054" description="Uncharacterized protein R710">
    <location>
        <begin position="1"/>
        <end position="194"/>
    </location>
</feature>
<feature type="transmembrane region" description="Helical" evidence="1">
    <location>
        <begin position="169"/>
        <end position="189"/>
    </location>
</feature>
<feature type="region of interest" description="Disordered" evidence="2">
    <location>
        <begin position="77"/>
        <end position="96"/>
    </location>
</feature>
<feature type="compositionally biased region" description="Polar residues" evidence="2">
    <location>
        <begin position="77"/>
        <end position="92"/>
    </location>
</feature>
<organism>
    <name type="scientific">Acanthamoeba polyphaga mimivirus</name>
    <name type="common">APMV</name>
    <dbReference type="NCBI Taxonomy" id="212035"/>
    <lineage>
        <taxon>Viruses</taxon>
        <taxon>Varidnaviria</taxon>
        <taxon>Bamfordvirae</taxon>
        <taxon>Nucleocytoviricota</taxon>
        <taxon>Megaviricetes</taxon>
        <taxon>Imitervirales</taxon>
        <taxon>Mimiviridae</taxon>
        <taxon>Megamimivirinae</taxon>
        <taxon>Mimivirus</taxon>
        <taxon>Mimivirus bradfordmassiliense</taxon>
    </lineage>
</organism>
<keyword id="KW-1043">Host membrane</keyword>
<keyword id="KW-0472">Membrane</keyword>
<keyword id="KW-1185">Reference proteome</keyword>
<keyword id="KW-0812">Transmembrane</keyword>
<keyword id="KW-1133">Transmembrane helix</keyword>
<keyword id="KW-0946">Virion</keyword>
<name>YR710_MIMIV</name>
<sequence length="194" mass="21939">MSWHTGSNQDNKLFPKGKLSGSYAPLDIAFENSPAMNEFENRLCHNNPIISERSMSPAVSASYSNPEATSCGCMQTQTQPQHQTLSQHLPQTHHTDAHDQQKLSGIFYNRTTDAQNQFSETINPPPSYTVHNTDIRIPLNRQQQYPANHLGSELLEGYNNVGTEPCMGFWEILLLIILIAVLVYGIYWLYKSEK</sequence>
<evidence type="ECO:0000255" key="1"/>
<evidence type="ECO:0000256" key="2">
    <source>
        <dbReference type="SAM" id="MobiDB-lite"/>
    </source>
</evidence>
<evidence type="ECO:0000269" key="3">
    <source>
    </source>
</evidence>
<evidence type="ECO:0000305" key="4"/>
<reference key="1">
    <citation type="journal article" date="2004" name="Science">
        <title>The 1.2-megabase genome sequence of Mimivirus.</title>
        <authorList>
            <person name="Raoult D."/>
            <person name="Audic S."/>
            <person name="Robert C."/>
            <person name="Abergel C."/>
            <person name="Renesto P."/>
            <person name="Ogata H."/>
            <person name="La Scola B."/>
            <person name="Susan M."/>
            <person name="Claverie J.-M."/>
        </authorList>
    </citation>
    <scope>NUCLEOTIDE SEQUENCE [LARGE SCALE GENOMIC DNA]</scope>
    <source>
        <strain>Rowbotham-Bradford</strain>
    </source>
</reference>
<reference key="2">
    <citation type="journal article" date="2006" name="J. Virol.">
        <title>Mimivirus giant particles incorporate a large fraction of anonymous and unique gene products.</title>
        <authorList>
            <person name="Renesto P."/>
            <person name="Abergel C."/>
            <person name="Decloquement P."/>
            <person name="Moinier D."/>
            <person name="Azza S."/>
            <person name="Ogata H."/>
            <person name="Fourquet P."/>
            <person name="Gorvel J.-P."/>
            <person name="Claverie J.-M."/>
            <person name="Raoult D."/>
        </authorList>
    </citation>
    <scope>IDENTIFICATION BY MASS SPECTROMETRY [LARGE SCALE ANALYSIS]</scope>
    <scope>SUBCELLULAR LOCATION</scope>
</reference>
<proteinExistence type="evidence at protein level"/>
<accession>Q5UQ56</accession>